<proteinExistence type="evidence at transcript level"/>
<name>W11B1_XENTR</name>
<protein>
    <recommendedName>
        <fullName evidence="6">Protein Wnt-11b-1</fullName>
    </recommendedName>
</protein>
<organism>
    <name type="scientific">Xenopus tropicalis</name>
    <name type="common">Western clawed frog</name>
    <name type="synonym">Silurana tropicalis</name>
    <dbReference type="NCBI Taxonomy" id="8364"/>
    <lineage>
        <taxon>Eukaryota</taxon>
        <taxon>Metazoa</taxon>
        <taxon>Chordata</taxon>
        <taxon>Craniata</taxon>
        <taxon>Vertebrata</taxon>
        <taxon>Euteleostomi</taxon>
        <taxon>Amphibia</taxon>
        <taxon>Batrachia</taxon>
        <taxon>Anura</taxon>
        <taxon>Pipoidea</taxon>
        <taxon>Pipidae</taxon>
        <taxon>Xenopodinae</taxon>
        <taxon>Xenopus</taxon>
        <taxon>Silurana</taxon>
    </lineage>
</organism>
<feature type="signal peptide" evidence="5">
    <location>
        <begin position="1"/>
        <end position="22"/>
    </location>
</feature>
<feature type="chain" id="PRO_0000397208" description="Protein Wnt-11b-1" evidence="5">
    <location>
        <begin position="23"/>
        <end position="353"/>
    </location>
</feature>
<feature type="modified residue" description="Sulfotyrosine" evidence="3">
    <location>
        <position position="274"/>
    </location>
</feature>
<feature type="modified residue" description="Sulfotyrosine" evidence="3">
    <location>
        <position position="281"/>
    </location>
</feature>
<feature type="lipid moiety-binding region" description="O-palmitoleoyl serine; by PORCN" evidence="4">
    <location>
        <position position="214"/>
    </location>
</feature>
<feature type="glycosylation site" description="N-linked (GlcNAc...) asparagine" evidence="5">
    <location>
        <position position="31"/>
    </location>
</feature>
<feature type="glycosylation site" description="N-linked (GlcNAc...) asparagine" evidence="5">
    <location>
        <position position="38"/>
    </location>
</feature>
<feature type="glycosylation site" description="N-linked (GlcNAc...) asparagine" evidence="5">
    <location>
        <position position="88"/>
    </location>
</feature>
<feature type="glycosylation site" description="N-linked (GlcNAc...) asparagine" evidence="5">
    <location>
        <position position="299"/>
    </location>
</feature>
<feature type="disulfide bond" evidence="2">
    <location>
        <begin position="78"/>
        <end position="89"/>
    </location>
</feature>
<feature type="disulfide bond" evidence="2">
    <location>
        <begin position="128"/>
        <end position="136"/>
    </location>
</feature>
<feature type="disulfide bond" evidence="2">
    <location>
        <begin position="138"/>
        <end position="155"/>
    </location>
</feature>
<feature type="disulfide bond" evidence="2">
    <location>
        <begin position="208"/>
        <end position="222"/>
    </location>
</feature>
<feature type="disulfide bond" evidence="2">
    <location>
        <begin position="210"/>
        <end position="217"/>
    </location>
</feature>
<feature type="disulfide bond" evidence="2">
    <location>
        <begin position="282"/>
        <end position="313"/>
    </location>
</feature>
<feature type="disulfide bond" evidence="2">
    <location>
        <begin position="298"/>
        <end position="308"/>
    </location>
</feature>
<feature type="disulfide bond" evidence="2">
    <location>
        <begin position="312"/>
        <end position="352"/>
    </location>
</feature>
<feature type="disulfide bond" evidence="2">
    <location>
        <begin position="328"/>
        <end position="343"/>
    </location>
</feature>
<feature type="disulfide bond" evidence="2">
    <location>
        <begin position="330"/>
        <end position="340"/>
    </location>
</feature>
<feature type="disulfide bond" evidence="2">
    <location>
        <begin position="335"/>
        <end position="336"/>
    </location>
</feature>
<reference evidence="8" key="1">
    <citation type="submission" date="2004-08" db="EMBL/GenBank/DDBJ databases">
        <authorList>
            <consortium name="NIH - Xenopus Gene Collection (XGC) project"/>
        </authorList>
    </citation>
    <scope>NUCLEOTIDE SEQUENCE [LARGE SCALE MRNA]</scope>
    <source>
        <tissue evidence="8">Neurula</tissue>
    </source>
</reference>
<reference evidence="7" key="2">
    <citation type="journal article" date="2007" name="Dev. Dyn.">
        <title>Census of vertebrate Wnt genes: isolation and developmental expression of Xenopus Wnt2, Wnt3, Wnt9a, Wnt9b, Wnt10a, and Wnt16.</title>
        <authorList>
            <person name="Garriock R.J."/>
            <person name="Warkman A.S."/>
            <person name="Meadows S.M."/>
            <person name="D'Agostino S."/>
            <person name="Krieg P.A."/>
        </authorList>
    </citation>
    <scope>NOMENCLATURE</scope>
</reference>
<sequence length="353" mass="38627">MAQIHHCVTLLLILCCSGLCGAIQWLGLTVNGSRVAWNESGHCRLLDGLVPEQSQLCKRNLELMQSVVNAAKQAKLTCQMTFSDMRWNCSSVENAPNFTPDLSKGTRESAFVYALASATLSHTIARACASGELPTCSCGATPAEVPGTGFRWGGCGDNLHYGLNMGSAFVDAPMKSSKSGGTQATKMINLHNNAVGRQVLMDSLETKCKCHGVSGSCSVKTCWKGLQDLPHIANELKSKYLGATKVIHRQTGTRRQLVPRELDIRPVRESELVYLVSSPDYCAKNPKLGSYGTQDRVCNKTSVGSDSCNLMCCGRGYNAYTETIVERCQCKYYYCCYVVCKKCERTVERYVCK</sequence>
<gene>
    <name evidence="6" type="primary">wnt11b-1</name>
    <name evidence="8" type="synonym">wnt11</name>
</gene>
<keyword id="KW-0217">Developmental protein</keyword>
<keyword id="KW-1015">Disulfide bond</keyword>
<keyword id="KW-0272">Extracellular matrix</keyword>
<keyword id="KW-0306">Gastrulation</keyword>
<keyword id="KW-0325">Glycoprotein</keyword>
<keyword id="KW-0449">Lipoprotein</keyword>
<keyword id="KW-1185">Reference proteome</keyword>
<keyword id="KW-0964">Secreted</keyword>
<keyword id="KW-0732">Signal</keyword>
<keyword id="KW-0765">Sulfation</keyword>
<keyword id="KW-0879">Wnt signaling pathway</keyword>
<accession>Q66II0</accession>
<comment type="function">
    <text evidence="3">Ligand for the frizzled7 transmembrane receptor. Primarily acts via non-canonical Wnt pathways mediated by either Ca(2+) and PKC, or by JNK and dvl2/dsh. Depending on the cellular context, can also signal via the canonical Wnt pathway mediated by beta-catenin and dvl2/dsh. May also inhibit canonical Wnt signaling. Maternally initiates dorsal/ventral axis formation by a canonical route, which signals via lrp6. In a complex with wnt5a, activates the canonical and non-canonical processes involved in axis formation. In the non-canonical pathway, acts through fzd7/fz7 to induce phosphorylation of dvl2/dsh. Signals through a non-canonical Wnt pathway to regulate convergent extension movements during gastrulation. Interactions with the secreted Wnt antagonist sfrp5 to coordinate foregut development, acting via a non-canonical wnt pathway whereby sfrp5 restricts wnt11b activity to prevent inappropriate foregut formation. Mediates cardiogenesis via non-canonical Wnt signaling involving JNK-activation and PKC. Acts redundantly with wnt11/wnt11r during pronephros induction (By similarity).</text>
</comment>
<comment type="subunit">
    <text evidence="3">Homodimer. Secreted homodimers form a complex with wnt5a homodimers; tyrosine sulfation of both wnt11 and wnt5a by tpst1 is required for this interaction. Interacts with the transmembrane receptor fzd7/fz7. Interacts with lrp6 and ryk. Interacts with tdgf1/frl1. Interacts weakly with frzb1 and strongly with frzb2/crescent. Interaction with frzb2/crescent antagonizes wnt11 function in the neuroectoderm, but enhances it in mesodermal tissue (By similarity).</text>
</comment>
<comment type="subcellular location">
    <subcellularLocation>
        <location evidence="3">Secreted</location>
        <location evidence="3">Extracellular space</location>
        <location evidence="3">Extracellular matrix</location>
    </subcellularLocation>
</comment>
<comment type="PTM">
    <text evidence="3">Glycosylation is required for protein secretion.</text>
</comment>
<comment type="PTM">
    <text evidence="1 4">Palmitoleoylation is required for efficient binding to frizzled receptors. Depalmitoleoylation leads to Wnt signaling pathway inhibition.</text>
</comment>
<comment type="miscellaneous">
    <text>Xenopus and other lower vertebrates contain duplicated wnt11 genes (wnt11 and wnt11b) resulting from an ancient gene duplication event, but the second copy has since been lost in mammals. In addition, X.tropicalis has two very similar wnt11b genes suggesting a further recent duplication event.</text>
</comment>
<comment type="similarity">
    <text evidence="5">Belongs to the Wnt family.</text>
</comment>
<dbReference type="EMBL" id="BC081341">
    <property type="protein sequence ID" value="AAH81341.1"/>
    <property type="molecule type" value="mRNA"/>
</dbReference>
<dbReference type="RefSeq" id="NP_001008133.1">
    <property type="nucleotide sequence ID" value="NM_001008132.1"/>
</dbReference>
<dbReference type="SMR" id="Q66II0"/>
<dbReference type="GlyCosmos" id="Q66II0">
    <property type="glycosylation" value="4 sites, No reported glycans"/>
</dbReference>
<dbReference type="DNASU" id="493495"/>
<dbReference type="GeneID" id="493495"/>
<dbReference type="KEGG" id="xtr:493495"/>
<dbReference type="InParanoid" id="Q66II0"/>
<dbReference type="OMA" id="HRNIEYR"/>
<dbReference type="OrthoDB" id="5945655at2759"/>
<dbReference type="Proteomes" id="UP000008143">
    <property type="component" value="Chromosome 8"/>
</dbReference>
<dbReference type="Bgee" id="ENSXETG00000038741">
    <property type="expression patterns" value="Expressed in gastrula and 6 other cell types or tissues"/>
</dbReference>
<dbReference type="GO" id="GO:0005576">
    <property type="term" value="C:extracellular region"/>
    <property type="evidence" value="ECO:0000250"/>
    <property type="project" value="UniProtKB"/>
</dbReference>
<dbReference type="GO" id="GO:0005102">
    <property type="term" value="F:signaling receptor binding"/>
    <property type="evidence" value="ECO:0007669"/>
    <property type="project" value="InterPro"/>
</dbReference>
<dbReference type="GO" id="GO:0007369">
    <property type="term" value="P:gastrulation"/>
    <property type="evidence" value="ECO:0007669"/>
    <property type="project" value="UniProtKB-KW"/>
</dbReference>
<dbReference type="GO" id="GO:0016055">
    <property type="term" value="P:Wnt signaling pathway"/>
    <property type="evidence" value="ECO:0007669"/>
    <property type="project" value="UniProtKB-KW"/>
</dbReference>
<dbReference type="CDD" id="cd19343">
    <property type="entry name" value="Wnt_Wnt11"/>
    <property type="match status" value="1"/>
</dbReference>
<dbReference type="FunFam" id="3.30.2460.20:FF:000001">
    <property type="entry name" value="Wnt homolog"/>
    <property type="match status" value="1"/>
</dbReference>
<dbReference type="Gene3D" id="3.30.2460.20">
    <property type="match status" value="1"/>
</dbReference>
<dbReference type="InterPro" id="IPR005817">
    <property type="entry name" value="Wnt"/>
</dbReference>
<dbReference type="InterPro" id="IPR043158">
    <property type="entry name" value="Wnt_C"/>
</dbReference>
<dbReference type="InterPro" id="IPR018161">
    <property type="entry name" value="Wnt_CS"/>
</dbReference>
<dbReference type="PANTHER" id="PTHR12027:SF34">
    <property type="entry name" value="PROTEIN WNT"/>
    <property type="match status" value="1"/>
</dbReference>
<dbReference type="PANTHER" id="PTHR12027">
    <property type="entry name" value="WNT RELATED"/>
    <property type="match status" value="1"/>
</dbReference>
<dbReference type="Pfam" id="PF00110">
    <property type="entry name" value="wnt"/>
    <property type="match status" value="1"/>
</dbReference>
<dbReference type="PRINTS" id="PR01349">
    <property type="entry name" value="WNTPROTEIN"/>
</dbReference>
<dbReference type="SMART" id="SM00097">
    <property type="entry name" value="WNT1"/>
    <property type="match status" value="1"/>
</dbReference>
<dbReference type="PROSITE" id="PS00246">
    <property type="entry name" value="WNT1"/>
    <property type="match status" value="1"/>
</dbReference>
<evidence type="ECO:0000250" key="1">
    <source>
        <dbReference type="UniProtKB" id="P27467"/>
    </source>
</evidence>
<evidence type="ECO:0000250" key="2">
    <source>
        <dbReference type="UniProtKB" id="P28026"/>
    </source>
</evidence>
<evidence type="ECO:0000250" key="3">
    <source>
        <dbReference type="UniProtKB" id="P49893"/>
    </source>
</evidence>
<evidence type="ECO:0000250" key="4">
    <source>
        <dbReference type="UniProtKB" id="P56704"/>
    </source>
</evidence>
<evidence type="ECO:0000255" key="5"/>
<evidence type="ECO:0000303" key="6">
    <source>
    </source>
</evidence>
<evidence type="ECO:0000305" key="7"/>
<evidence type="ECO:0000312" key="8">
    <source>
        <dbReference type="EMBL" id="AAH81341.1"/>
    </source>
</evidence>